<gene>
    <name evidence="1" type="primary">rpsT</name>
    <name type="ordered locus">SMGWSS_203</name>
</gene>
<protein>
    <recommendedName>
        <fullName evidence="1">Small ribosomal subunit protein bS20</fullName>
    </recommendedName>
    <alternativeName>
        <fullName evidence="2">30S ribosomal protein S20</fullName>
    </alternativeName>
</protein>
<organism>
    <name type="scientific">Karelsulcia muelleri (strain GWSS)</name>
    <name type="common">Sulcia muelleri</name>
    <dbReference type="NCBI Taxonomy" id="444179"/>
    <lineage>
        <taxon>Bacteria</taxon>
        <taxon>Pseudomonadati</taxon>
        <taxon>Bacteroidota</taxon>
        <taxon>Flavobacteriia</taxon>
        <taxon>Flavobacteriales</taxon>
        <taxon>Candidatus Karelsulcia</taxon>
    </lineage>
</organism>
<comment type="function">
    <text evidence="1">Binds directly to 16S ribosomal RNA.</text>
</comment>
<comment type="similarity">
    <text evidence="1">Belongs to the bacterial ribosomal protein bS20 family.</text>
</comment>
<feature type="chain" id="PRO_1000126526" description="Small ribosomal subunit protein bS20">
    <location>
        <begin position="1"/>
        <end position="79"/>
    </location>
</feature>
<sequence>MANTKSALKQIRKNNLKRLQNKFVLKTTKTAIKKLKLESKKNLNAFPKISSLIDKLAKKKIIHKNKSNRIKSKLVKLIN</sequence>
<proteinExistence type="inferred from homology"/>
<keyword id="KW-0687">Ribonucleoprotein</keyword>
<keyword id="KW-0689">Ribosomal protein</keyword>
<keyword id="KW-0694">RNA-binding</keyword>
<keyword id="KW-0699">rRNA-binding</keyword>
<evidence type="ECO:0000255" key="1">
    <source>
        <dbReference type="HAMAP-Rule" id="MF_00500"/>
    </source>
</evidence>
<evidence type="ECO:0000305" key="2"/>
<name>RS20_KARMG</name>
<dbReference type="EMBL" id="CP000770">
    <property type="protein sequence ID" value="ABS30602.1"/>
    <property type="molecule type" value="Genomic_DNA"/>
</dbReference>
<dbReference type="SMR" id="A8Z651"/>
<dbReference type="STRING" id="444179.SMGWSS_203"/>
<dbReference type="KEGG" id="smg:SMGWSS_203"/>
<dbReference type="HOGENOM" id="CLU_160655_3_2_10"/>
<dbReference type="Proteomes" id="UP000000781">
    <property type="component" value="Chromosome"/>
</dbReference>
<dbReference type="GO" id="GO:1990904">
    <property type="term" value="C:ribonucleoprotein complex"/>
    <property type="evidence" value="ECO:0007669"/>
    <property type="project" value="UniProtKB-KW"/>
</dbReference>
<dbReference type="GO" id="GO:0005840">
    <property type="term" value="C:ribosome"/>
    <property type="evidence" value="ECO:0007669"/>
    <property type="project" value="UniProtKB-KW"/>
</dbReference>
<dbReference type="GO" id="GO:0019843">
    <property type="term" value="F:rRNA binding"/>
    <property type="evidence" value="ECO:0007669"/>
    <property type="project" value="UniProtKB-UniRule"/>
</dbReference>
<dbReference type="GO" id="GO:0003735">
    <property type="term" value="F:structural constituent of ribosome"/>
    <property type="evidence" value="ECO:0007669"/>
    <property type="project" value="InterPro"/>
</dbReference>
<dbReference type="GO" id="GO:0006412">
    <property type="term" value="P:translation"/>
    <property type="evidence" value="ECO:0007669"/>
    <property type="project" value="UniProtKB-UniRule"/>
</dbReference>
<dbReference type="Gene3D" id="1.20.58.110">
    <property type="entry name" value="Ribosomal protein S20"/>
    <property type="match status" value="1"/>
</dbReference>
<dbReference type="HAMAP" id="MF_00500">
    <property type="entry name" value="Ribosomal_bS20"/>
    <property type="match status" value="1"/>
</dbReference>
<dbReference type="InterPro" id="IPR002583">
    <property type="entry name" value="Ribosomal_bS20"/>
</dbReference>
<dbReference type="InterPro" id="IPR036510">
    <property type="entry name" value="Ribosomal_bS20_sf"/>
</dbReference>
<dbReference type="NCBIfam" id="TIGR00029">
    <property type="entry name" value="S20"/>
    <property type="match status" value="1"/>
</dbReference>
<dbReference type="Pfam" id="PF01649">
    <property type="entry name" value="Ribosomal_S20p"/>
    <property type="match status" value="1"/>
</dbReference>
<dbReference type="SUPFAM" id="SSF46992">
    <property type="entry name" value="Ribosomal protein S20"/>
    <property type="match status" value="1"/>
</dbReference>
<reference key="1">
    <citation type="journal article" date="2007" name="Proc. Natl. Acad. Sci. U.S.A.">
        <title>Parallel genomic evolution and metabolic interdependence in an ancient symbiosis.</title>
        <authorList>
            <person name="McCutcheon J.P."/>
            <person name="Moran N.A."/>
        </authorList>
    </citation>
    <scope>NUCLEOTIDE SEQUENCE [LARGE SCALE GENOMIC DNA]</scope>
    <source>
        <strain>GWSS</strain>
    </source>
</reference>
<accession>A8Z651</accession>